<comment type="function">
    <text evidence="1">DNA-dependent RNA polymerase catalyzes the transcription of DNA into RNA using the four ribonucleoside triphosphates as substrates.</text>
</comment>
<comment type="catalytic activity">
    <reaction evidence="1">
        <text>RNA(n) + a ribonucleoside 5'-triphosphate = RNA(n+1) + diphosphate</text>
        <dbReference type="Rhea" id="RHEA:21248"/>
        <dbReference type="Rhea" id="RHEA-COMP:14527"/>
        <dbReference type="Rhea" id="RHEA-COMP:17342"/>
        <dbReference type="ChEBI" id="CHEBI:33019"/>
        <dbReference type="ChEBI" id="CHEBI:61557"/>
        <dbReference type="ChEBI" id="CHEBI:140395"/>
        <dbReference type="EC" id="2.7.7.6"/>
    </reaction>
</comment>
<comment type="subunit">
    <text evidence="1">The RNAP catalytic core consists of 2 alpha, 1 beta, 1 beta' and 1 omega subunit. When a sigma factor is associated with the core the holoenzyme is formed, which can initiate transcription.</text>
</comment>
<comment type="similarity">
    <text evidence="1">Belongs to the RNA polymerase beta chain family.</text>
</comment>
<evidence type="ECO:0000255" key="1">
    <source>
        <dbReference type="HAMAP-Rule" id="MF_01321"/>
    </source>
</evidence>
<evidence type="ECO:0000256" key="2">
    <source>
        <dbReference type="SAM" id="MobiDB-lite"/>
    </source>
</evidence>
<gene>
    <name evidence="1" type="primary">rpoB</name>
    <name type="ordered locus">Dred_0207</name>
</gene>
<organism>
    <name type="scientific">Desulforamulus reducens (strain ATCC BAA-1160 / DSM 100696 / MI-1)</name>
    <name type="common">Desulfotomaculum reducens</name>
    <dbReference type="NCBI Taxonomy" id="349161"/>
    <lineage>
        <taxon>Bacteria</taxon>
        <taxon>Bacillati</taxon>
        <taxon>Bacillota</taxon>
        <taxon>Clostridia</taxon>
        <taxon>Eubacteriales</taxon>
        <taxon>Peptococcaceae</taxon>
        <taxon>Desulforamulus</taxon>
    </lineage>
</organism>
<sequence length="1145" mass="129390">MAYPEKVGNRVRWNYGKLREVLDLPNLIEVQRNSYEWFLQEGLREVFHDISPIQDFTGNLILEFLDYTLGEPKYSVEECKERDVTYAAPLRVKVRLINKETGEVKEQEVFMGDFPLMTSKGTFIINGAERVIVSQLVRSPGVYFADQIDPSGKRLFATTMIPNRGAWLEFETDVNDHIFVRIDRTRKIPATVLIRALGYGSNALIMELFENDKFVQETLTRDNTDTEEEALVEIYKRLRPGEPPTVESARSLLNTLFFDPKRYDLAHVGRYKLQKKLKHGILYRYPNGEEGPKEWDRLLNKEVPVDREFIRELTKEDIIATFRYLLNLMQGEGIVDDIDHLGNRRLRSVGELLQNQFRIGLSRMERVVRERMTIQDVDVITPQVLINIRPVVASIKEFFGSSQLSQFMDQTNPLAELTHKRRLSALGPGGLSRERAGFEVRDVHHSHYGRMCPIETPEGPNIGLIGSLSTYARINSFGFMEAPYRKVDKENKRVTDEIVYLTADEEEDHIIAQANAPLDENGYFVEERVNARRGHDTLLVPTDRVEYMDVSPKQVFSVATSLIPFLEHDDANRALMGANMQRQAVPLLRCQAPVVGTGIEHRAAKDSGVCIVAERGGEVVRVTATEVAVRTDEGRTDTYKLLKFTRSNQGTCINQKPIVNKGDRVEEGQILADGPATEQGELALGRNILVAFMTWEGNNYEDAILISEKAVKEDFFTSIHIEEYECDARDTKLGPEEITRDIPNVGEDILKDLDERGIIRVGAEVRPGDILVGKVTPKGETELTAEERLLRAIFGEKAREVRDTSLRVPHGEAGKIVDVKVFSRENGDELPPGVNHLVRCYIAQKRKISEGDKMAGRHGNKGVVARILPEEDMPFMADGTPVQIVLNPLGVPSRMNIGQVLETHLGWAAKTLGFNVATPVFNGASEESIWETLRRAELPEDGKTVLYDGRTGEPFDNRVTVGYIYMIKLHHLVDDKIHARSTGPYSLVTQQPLGGKAQFGGQRFGEMEVWALEAYGAAYTLQEILTVKSDDVVGRVKTYEAIVKGENVPEPGVPESFKVLIKELQSLGLDVKVLAEDEKEIEIKEIEEDITETAKELGIELPEERRVSSSKEEIEEEEEVEDNSDEFDETFLEEAEDDFSLDDED</sequence>
<keyword id="KW-0240">DNA-directed RNA polymerase</keyword>
<keyword id="KW-0548">Nucleotidyltransferase</keyword>
<keyword id="KW-1185">Reference proteome</keyword>
<keyword id="KW-0804">Transcription</keyword>
<keyword id="KW-0808">Transferase</keyword>
<name>RPOB_DESRM</name>
<reference key="1">
    <citation type="submission" date="2007-03" db="EMBL/GenBank/DDBJ databases">
        <title>Complete sequence of Desulfotomaculum reducens MI-1.</title>
        <authorList>
            <consortium name="US DOE Joint Genome Institute"/>
            <person name="Copeland A."/>
            <person name="Lucas S."/>
            <person name="Lapidus A."/>
            <person name="Barry K."/>
            <person name="Detter J.C."/>
            <person name="Glavina del Rio T."/>
            <person name="Hammon N."/>
            <person name="Israni S."/>
            <person name="Dalin E."/>
            <person name="Tice H."/>
            <person name="Pitluck S."/>
            <person name="Sims D."/>
            <person name="Brettin T."/>
            <person name="Bruce D."/>
            <person name="Han C."/>
            <person name="Tapia R."/>
            <person name="Schmutz J."/>
            <person name="Larimer F."/>
            <person name="Land M."/>
            <person name="Hauser L."/>
            <person name="Kyrpides N."/>
            <person name="Kim E."/>
            <person name="Tebo B.M."/>
            <person name="Richardson P."/>
        </authorList>
    </citation>
    <scope>NUCLEOTIDE SEQUENCE [LARGE SCALE GENOMIC DNA]</scope>
    <source>
        <strain>ATCC BAA-1160 / DSM 100696 / MI-1</strain>
    </source>
</reference>
<accession>A4J103</accession>
<feature type="chain" id="PRO_1000073237" description="DNA-directed RNA polymerase subunit beta">
    <location>
        <begin position="1"/>
        <end position="1145"/>
    </location>
</feature>
<feature type="region of interest" description="Disordered" evidence="2">
    <location>
        <begin position="1101"/>
        <end position="1145"/>
    </location>
</feature>
<feature type="compositionally biased region" description="Basic and acidic residues" evidence="2">
    <location>
        <begin position="1101"/>
        <end position="1112"/>
    </location>
</feature>
<feature type="compositionally biased region" description="Acidic residues" evidence="2">
    <location>
        <begin position="1113"/>
        <end position="1145"/>
    </location>
</feature>
<dbReference type="EC" id="2.7.7.6" evidence="1"/>
<dbReference type="EMBL" id="CP000612">
    <property type="protein sequence ID" value="ABO48756.1"/>
    <property type="molecule type" value="Genomic_DNA"/>
</dbReference>
<dbReference type="SMR" id="A4J103"/>
<dbReference type="STRING" id="349161.Dred_0207"/>
<dbReference type="KEGG" id="drm:Dred_0207"/>
<dbReference type="eggNOG" id="COG0085">
    <property type="taxonomic scope" value="Bacteria"/>
</dbReference>
<dbReference type="HOGENOM" id="CLU_000524_4_1_9"/>
<dbReference type="Proteomes" id="UP000001556">
    <property type="component" value="Chromosome"/>
</dbReference>
<dbReference type="GO" id="GO:0000428">
    <property type="term" value="C:DNA-directed RNA polymerase complex"/>
    <property type="evidence" value="ECO:0007669"/>
    <property type="project" value="UniProtKB-KW"/>
</dbReference>
<dbReference type="GO" id="GO:0003677">
    <property type="term" value="F:DNA binding"/>
    <property type="evidence" value="ECO:0007669"/>
    <property type="project" value="UniProtKB-UniRule"/>
</dbReference>
<dbReference type="GO" id="GO:0003899">
    <property type="term" value="F:DNA-directed RNA polymerase activity"/>
    <property type="evidence" value="ECO:0007669"/>
    <property type="project" value="UniProtKB-UniRule"/>
</dbReference>
<dbReference type="GO" id="GO:0032549">
    <property type="term" value="F:ribonucleoside binding"/>
    <property type="evidence" value="ECO:0007669"/>
    <property type="project" value="InterPro"/>
</dbReference>
<dbReference type="GO" id="GO:0006351">
    <property type="term" value="P:DNA-templated transcription"/>
    <property type="evidence" value="ECO:0007669"/>
    <property type="project" value="UniProtKB-UniRule"/>
</dbReference>
<dbReference type="CDD" id="cd00653">
    <property type="entry name" value="RNA_pol_B_RPB2"/>
    <property type="match status" value="1"/>
</dbReference>
<dbReference type="FunFam" id="3.90.1800.10:FF:000001">
    <property type="entry name" value="DNA-directed RNA polymerase subunit beta"/>
    <property type="match status" value="1"/>
</dbReference>
<dbReference type="Gene3D" id="2.40.50.100">
    <property type="match status" value="1"/>
</dbReference>
<dbReference type="Gene3D" id="2.40.50.150">
    <property type="match status" value="1"/>
</dbReference>
<dbReference type="Gene3D" id="3.90.1100.10">
    <property type="match status" value="1"/>
</dbReference>
<dbReference type="Gene3D" id="2.30.150.10">
    <property type="entry name" value="DNA-directed RNA polymerase, beta subunit, external 1 domain"/>
    <property type="match status" value="1"/>
</dbReference>
<dbReference type="Gene3D" id="2.40.270.10">
    <property type="entry name" value="DNA-directed RNA polymerase, subunit 2, domain 6"/>
    <property type="match status" value="2"/>
</dbReference>
<dbReference type="Gene3D" id="3.90.1800.10">
    <property type="entry name" value="RNA polymerase alpha subunit dimerisation domain"/>
    <property type="match status" value="1"/>
</dbReference>
<dbReference type="Gene3D" id="3.90.1110.10">
    <property type="entry name" value="RNA polymerase Rpb2, domain 2"/>
    <property type="match status" value="1"/>
</dbReference>
<dbReference type="HAMAP" id="MF_01321">
    <property type="entry name" value="RNApol_bact_RpoB"/>
    <property type="match status" value="1"/>
</dbReference>
<dbReference type="InterPro" id="IPR042107">
    <property type="entry name" value="DNA-dir_RNA_pol_bsu_ext_1_sf"/>
</dbReference>
<dbReference type="InterPro" id="IPR019462">
    <property type="entry name" value="DNA-dir_RNA_pol_bsu_external_1"/>
</dbReference>
<dbReference type="InterPro" id="IPR015712">
    <property type="entry name" value="DNA-dir_RNA_pol_su2"/>
</dbReference>
<dbReference type="InterPro" id="IPR007120">
    <property type="entry name" value="DNA-dir_RNAP_su2_dom"/>
</dbReference>
<dbReference type="InterPro" id="IPR037033">
    <property type="entry name" value="DNA-dir_RNAP_su2_hyb_sf"/>
</dbReference>
<dbReference type="InterPro" id="IPR010243">
    <property type="entry name" value="RNA_pol_bsu_bac"/>
</dbReference>
<dbReference type="InterPro" id="IPR007121">
    <property type="entry name" value="RNA_pol_bsu_CS"/>
</dbReference>
<dbReference type="InterPro" id="IPR007644">
    <property type="entry name" value="RNA_pol_bsu_protrusion"/>
</dbReference>
<dbReference type="InterPro" id="IPR007642">
    <property type="entry name" value="RNA_pol_Rpb2_2"/>
</dbReference>
<dbReference type="InterPro" id="IPR037034">
    <property type="entry name" value="RNA_pol_Rpb2_2_sf"/>
</dbReference>
<dbReference type="InterPro" id="IPR007645">
    <property type="entry name" value="RNA_pol_Rpb2_3"/>
</dbReference>
<dbReference type="InterPro" id="IPR007641">
    <property type="entry name" value="RNA_pol_Rpb2_7"/>
</dbReference>
<dbReference type="InterPro" id="IPR014724">
    <property type="entry name" value="RNA_pol_RPB2_OB-fold"/>
</dbReference>
<dbReference type="NCBIfam" id="NF001616">
    <property type="entry name" value="PRK00405.1"/>
    <property type="match status" value="1"/>
</dbReference>
<dbReference type="NCBIfam" id="TIGR02013">
    <property type="entry name" value="rpoB"/>
    <property type="match status" value="1"/>
</dbReference>
<dbReference type="PANTHER" id="PTHR20856">
    <property type="entry name" value="DNA-DIRECTED RNA POLYMERASE I SUBUNIT 2"/>
    <property type="match status" value="1"/>
</dbReference>
<dbReference type="Pfam" id="PF04563">
    <property type="entry name" value="RNA_pol_Rpb2_1"/>
    <property type="match status" value="1"/>
</dbReference>
<dbReference type="Pfam" id="PF04561">
    <property type="entry name" value="RNA_pol_Rpb2_2"/>
    <property type="match status" value="2"/>
</dbReference>
<dbReference type="Pfam" id="PF04565">
    <property type="entry name" value="RNA_pol_Rpb2_3"/>
    <property type="match status" value="1"/>
</dbReference>
<dbReference type="Pfam" id="PF10385">
    <property type="entry name" value="RNA_pol_Rpb2_45"/>
    <property type="match status" value="1"/>
</dbReference>
<dbReference type="Pfam" id="PF00562">
    <property type="entry name" value="RNA_pol_Rpb2_6"/>
    <property type="match status" value="1"/>
</dbReference>
<dbReference type="Pfam" id="PF04560">
    <property type="entry name" value="RNA_pol_Rpb2_7"/>
    <property type="match status" value="1"/>
</dbReference>
<dbReference type="SUPFAM" id="SSF64484">
    <property type="entry name" value="beta and beta-prime subunits of DNA dependent RNA-polymerase"/>
    <property type="match status" value="1"/>
</dbReference>
<dbReference type="PROSITE" id="PS01166">
    <property type="entry name" value="RNA_POL_BETA"/>
    <property type="match status" value="1"/>
</dbReference>
<protein>
    <recommendedName>
        <fullName evidence="1">DNA-directed RNA polymerase subunit beta</fullName>
        <shortName evidence="1">RNAP subunit beta</shortName>
        <ecNumber evidence="1">2.7.7.6</ecNumber>
    </recommendedName>
    <alternativeName>
        <fullName evidence="1">RNA polymerase subunit beta</fullName>
    </alternativeName>
    <alternativeName>
        <fullName evidence="1">Transcriptase subunit beta</fullName>
    </alternativeName>
</protein>
<proteinExistence type="inferred from homology"/>